<comment type="function">
    <text evidence="1">Formation of pseudouridine at positions 38, 39 and 40 in the anticodon stem and loop of transfer RNAs.</text>
</comment>
<comment type="catalytic activity">
    <reaction evidence="1">
        <text>uridine(38/39/40) in tRNA = pseudouridine(38/39/40) in tRNA</text>
        <dbReference type="Rhea" id="RHEA:22376"/>
        <dbReference type="Rhea" id="RHEA-COMP:10085"/>
        <dbReference type="Rhea" id="RHEA-COMP:10087"/>
        <dbReference type="ChEBI" id="CHEBI:65314"/>
        <dbReference type="ChEBI" id="CHEBI:65315"/>
        <dbReference type="EC" id="5.4.99.12"/>
    </reaction>
</comment>
<comment type="subunit">
    <text evidence="1">Homodimer.</text>
</comment>
<comment type="similarity">
    <text evidence="1">Belongs to the tRNA pseudouridine synthase TruA family.</text>
</comment>
<reference key="1">
    <citation type="journal article" date="2009" name="PLoS ONE">
        <title>Genome sequence of the endosymbiont Rickettsia peacockii and comparison with virulent Rickettsia rickettsii: identification of virulence factors.</title>
        <authorList>
            <person name="Felsheim R.F."/>
            <person name="Kurtti T.J."/>
            <person name="Munderloh U.G."/>
        </authorList>
    </citation>
    <scope>NUCLEOTIDE SEQUENCE [LARGE SCALE GENOMIC DNA]</scope>
    <source>
        <strain>Rustic</strain>
    </source>
</reference>
<organism>
    <name type="scientific">Rickettsia peacockii (strain Rustic)</name>
    <dbReference type="NCBI Taxonomy" id="562019"/>
    <lineage>
        <taxon>Bacteria</taxon>
        <taxon>Pseudomonadati</taxon>
        <taxon>Pseudomonadota</taxon>
        <taxon>Alphaproteobacteria</taxon>
        <taxon>Rickettsiales</taxon>
        <taxon>Rickettsiaceae</taxon>
        <taxon>Rickettsieae</taxon>
        <taxon>Rickettsia</taxon>
        <taxon>spotted fever group</taxon>
    </lineage>
</organism>
<gene>
    <name evidence="1" type="primary">truA</name>
    <name type="ordered locus">RPR_07500</name>
</gene>
<accession>C4K2W2</accession>
<evidence type="ECO:0000255" key="1">
    <source>
        <dbReference type="HAMAP-Rule" id="MF_00171"/>
    </source>
</evidence>
<name>TRUA_RICPU</name>
<proteinExistence type="inferred from homology"/>
<protein>
    <recommendedName>
        <fullName evidence="1">tRNA pseudouridine synthase A</fullName>
        <ecNumber evidence="1">5.4.99.12</ecNumber>
    </recommendedName>
    <alternativeName>
        <fullName evidence="1">tRNA pseudouridine(38-40) synthase</fullName>
    </alternativeName>
    <alternativeName>
        <fullName evidence="1">tRNA pseudouridylate synthase I</fullName>
    </alternativeName>
    <alternativeName>
        <fullName evidence="1">tRNA-uridine isomerase I</fullName>
    </alternativeName>
</protein>
<dbReference type="EC" id="5.4.99.12" evidence="1"/>
<dbReference type="EMBL" id="CP001227">
    <property type="protein sequence ID" value="ACR47907.1"/>
    <property type="molecule type" value="Genomic_DNA"/>
</dbReference>
<dbReference type="RefSeq" id="WP_012737059.1">
    <property type="nucleotide sequence ID" value="NC_012730.1"/>
</dbReference>
<dbReference type="SMR" id="C4K2W2"/>
<dbReference type="KEGG" id="rpk:RPR_07500"/>
<dbReference type="HOGENOM" id="CLU_014673_0_2_5"/>
<dbReference type="Proteomes" id="UP000005015">
    <property type="component" value="Chromosome"/>
</dbReference>
<dbReference type="GO" id="GO:0003723">
    <property type="term" value="F:RNA binding"/>
    <property type="evidence" value="ECO:0007669"/>
    <property type="project" value="InterPro"/>
</dbReference>
<dbReference type="GO" id="GO:0160147">
    <property type="term" value="F:tRNA pseudouridine(38-40) synthase activity"/>
    <property type="evidence" value="ECO:0007669"/>
    <property type="project" value="UniProtKB-EC"/>
</dbReference>
<dbReference type="GO" id="GO:0031119">
    <property type="term" value="P:tRNA pseudouridine synthesis"/>
    <property type="evidence" value="ECO:0007669"/>
    <property type="project" value="UniProtKB-UniRule"/>
</dbReference>
<dbReference type="CDD" id="cd02570">
    <property type="entry name" value="PseudoU_synth_EcTruA"/>
    <property type="match status" value="1"/>
</dbReference>
<dbReference type="FunFam" id="3.30.70.580:FF:000001">
    <property type="entry name" value="tRNA pseudouridine synthase A"/>
    <property type="match status" value="1"/>
</dbReference>
<dbReference type="Gene3D" id="3.30.70.660">
    <property type="entry name" value="Pseudouridine synthase I, catalytic domain, C-terminal subdomain"/>
    <property type="match status" value="1"/>
</dbReference>
<dbReference type="Gene3D" id="3.30.70.580">
    <property type="entry name" value="Pseudouridine synthase I, catalytic domain, N-terminal subdomain"/>
    <property type="match status" value="1"/>
</dbReference>
<dbReference type="HAMAP" id="MF_00171">
    <property type="entry name" value="TruA"/>
    <property type="match status" value="1"/>
</dbReference>
<dbReference type="InterPro" id="IPR020103">
    <property type="entry name" value="PsdUridine_synth_cat_dom_sf"/>
</dbReference>
<dbReference type="InterPro" id="IPR001406">
    <property type="entry name" value="PsdUridine_synth_TruA"/>
</dbReference>
<dbReference type="InterPro" id="IPR020097">
    <property type="entry name" value="PsdUridine_synth_TruA_a/b_dom"/>
</dbReference>
<dbReference type="InterPro" id="IPR020095">
    <property type="entry name" value="PsdUridine_synth_TruA_C"/>
</dbReference>
<dbReference type="InterPro" id="IPR020094">
    <property type="entry name" value="TruA/RsuA/RluB/E/F_N"/>
</dbReference>
<dbReference type="NCBIfam" id="TIGR00071">
    <property type="entry name" value="hisT_truA"/>
    <property type="match status" value="1"/>
</dbReference>
<dbReference type="PANTHER" id="PTHR11142">
    <property type="entry name" value="PSEUDOURIDYLATE SYNTHASE"/>
    <property type="match status" value="1"/>
</dbReference>
<dbReference type="PANTHER" id="PTHR11142:SF0">
    <property type="entry name" value="TRNA PSEUDOURIDINE SYNTHASE-LIKE 1"/>
    <property type="match status" value="1"/>
</dbReference>
<dbReference type="Pfam" id="PF01416">
    <property type="entry name" value="PseudoU_synth_1"/>
    <property type="match status" value="2"/>
</dbReference>
<dbReference type="PIRSF" id="PIRSF001430">
    <property type="entry name" value="tRNA_psdUrid_synth"/>
    <property type="match status" value="1"/>
</dbReference>
<dbReference type="SUPFAM" id="SSF55120">
    <property type="entry name" value="Pseudouridine synthase"/>
    <property type="match status" value="1"/>
</dbReference>
<sequence>MYRYKITIEYLGTDLAGWQRQAGVMSVQQILEEAIYKFSGEQVILFGSGRTDAGVHAVGQVAHFDLSKYLEPHKIITAINYFARPYAVGVWNCELAPNNFHARFSATSRYYIYRIINRPCPSVIDLNRAWWISSPLDVPAMQQAAAYLLGKHDFTSFRASSCQSKSPIKTLTELNIIKEDEEIKLYLSAPSFLHHMVRNIVGSLVLVGKNIWQAEQIKDVLEAKDRKAAGPTAPASGLYFVKAAY</sequence>
<keyword id="KW-0413">Isomerase</keyword>
<keyword id="KW-0819">tRNA processing</keyword>
<feature type="chain" id="PRO_1000203699" description="tRNA pseudouridine synthase A">
    <location>
        <begin position="1"/>
        <end position="245"/>
    </location>
</feature>
<feature type="active site" description="Nucleophile" evidence="1">
    <location>
        <position position="52"/>
    </location>
</feature>
<feature type="binding site" evidence="1">
    <location>
        <position position="111"/>
    </location>
    <ligand>
        <name>substrate</name>
    </ligand>
</feature>